<dbReference type="EC" id="7.4.2.8" evidence="1"/>
<dbReference type="EMBL" id="AP008934">
    <property type="protein sequence ID" value="BAE19108.1"/>
    <property type="molecule type" value="Genomic_DNA"/>
</dbReference>
<dbReference type="RefSeq" id="WP_011303631.1">
    <property type="nucleotide sequence ID" value="NZ_MTGA01000039.1"/>
</dbReference>
<dbReference type="SMR" id="Q49VV2"/>
<dbReference type="GeneID" id="3616774"/>
<dbReference type="KEGG" id="ssp:SSP1963"/>
<dbReference type="PATRIC" id="fig|342451.11.peg.1957"/>
<dbReference type="eggNOG" id="COG0653">
    <property type="taxonomic scope" value="Bacteria"/>
</dbReference>
<dbReference type="HOGENOM" id="CLU_005314_3_0_9"/>
<dbReference type="OrthoDB" id="9805579at2"/>
<dbReference type="Proteomes" id="UP000006371">
    <property type="component" value="Chromosome"/>
</dbReference>
<dbReference type="GO" id="GO:0031522">
    <property type="term" value="C:cell envelope Sec protein transport complex"/>
    <property type="evidence" value="ECO:0007669"/>
    <property type="project" value="TreeGrafter"/>
</dbReference>
<dbReference type="GO" id="GO:0005829">
    <property type="term" value="C:cytosol"/>
    <property type="evidence" value="ECO:0007669"/>
    <property type="project" value="TreeGrafter"/>
</dbReference>
<dbReference type="GO" id="GO:0005886">
    <property type="term" value="C:plasma membrane"/>
    <property type="evidence" value="ECO:0007669"/>
    <property type="project" value="UniProtKB-SubCell"/>
</dbReference>
<dbReference type="GO" id="GO:0005524">
    <property type="term" value="F:ATP binding"/>
    <property type="evidence" value="ECO:0007669"/>
    <property type="project" value="UniProtKB-UniRule"/>
</dbReference>
<dbReference type="GO" id="GO:0046872">
    <property type="term" value="F:metal ion binding"/>
    <property type="evidence" value="ECO:0007669"/>
    <property type="project" value="UniProtKB-KW"/>
</dbReference>
<dbReference type="GO" id="GO:0008564">
    <property type="term" value="F:protein-exporting ATPase activity"/>
    <property type="evidence" value="ECO:0007669"/>
    <property type="project" value="UniProtKB-EC"/>
</dbReference>
<dbReference type="GO" id="GO:0065002">
    <property type="term" value="P:intracellular protein transmembrane transport"/>
    <property type="evidence" value="ECO:0007669"/>
    <property type="project" value="UniProtKB-UniRule"/>
</dbReference>
<dbReference type="GO" id="GO:0017038">
    <property type="term" value="P:protein import"/>
    <property type="evidence" value="ECO:0007669"/>
    <property type="project" value="InterPro"/>
</dbReference>
<dbReference type="GO" id="GO:0006605">
    <property type="term" value="P:protein targeting"/>
    <property type="evidence" value="ECO:0007669"/>
    <property type="project" value="UniProtKB-UniRule"/>
</dbReference>
<dbReference type="GO" id="GO:0043952">
    <property type="term" value="P:protein transport by the Sec complex"/>
    <property type="evidence" value="ECO:0007669"/>
    <property type="project" value="TreeGrafter"/>
</dbReference>
<dbReference type="CDD" id="cd17928">
    <property type="entry name" value="DEXDc_SecA"/>
    <property type="match status" value="1"/>
</dbReference>
<dbReference type="CDD" id="cd18803">
    <property type="entry name" value="SF2_C_secA"/>
    <property type="match status" value="1"/>
</dbReference>
<dbReference type="FunFam" id="3.40.50.300:FF:000694">
    <property type="entry name" value="Preprotein translocase subunit SecA"/>
    <property type="match status" value="1"/>
</dbReference>
<dbReference type="FunFam" id="3.90.1440.10:FF:000002">
    <property type="entry name" value="Protein translocase subunit SecA"/>
    <property type="match status" value="1"/>
</dbReference>
<dbReference type="Gene3D" id="1.10.3060.10">
    <property type="entry name" value="Helical scaffold and wing domains of SecA"/>
    <property type="match status" value="1"/>
</dbReference>
<dbReference type="Gene3D" id="3.40.50.300">
    <property type="entry name" value="P-loop containing nucleotide triphosphate hydrolases"/>
    <property type="match status" value="2"/>
</dbReference>
<dbReference type="Gene3D" id="3.90.1440.10">
    <property type="entry name" value="SecA, preprotein cross-linking domain"/>
    <property type="match status" value="1"/>
</dbReference>
<dbReference type="HAMAP" id="MF_01382">
    <property type="entry name" value="SecA"/>
    <property type="match status" value="1"/>
</dbReference>
<dbReference type="InterPro" id="IPR014001">
    <property type="entry name" value="Helicase_ATP-bd"/>
</dbReference>
<dbReference type="InterPro" id="IPR001650">
    <property type="entry name" value="Helicase_C-like"/>
</dbReference>
<dbReference type="InterPro" id="IPR027417">
    <property type="entry name" value="P-loop_NTPase"/>
</dbReference>
<dbReference type="InterPro" id="IPR004027">
    <property type="entry name" value="SEC_C_motif"/>
</dbReference>
<dbReference type="InterPro" id="IPR000185">
    <property type="entry name" value="SecA"/>
</dbReference>
<dbReference type="InterPro" id="IPR020937">
    <property type="entry name" value="SecA_CS"/>
</dbReference>
<dbReference type="InterPro" id="IPR011115">
    <property type="entry name" value="SecA_DEAD"/>
</dbReference>
<dbReference type="InterPro" id="IPR014018">
    <property type="entry name" value="SecA_motor_DEAD"/>
</dbReference>
<dbReference type="InterPro" id="IPR011130">
    <property type="entry name" value="SecA_preprotein_X-link_dom"/>
</dbReference>
<dbReference type="InterPro" id="IPR044722">
    <property type="entry name" value="SecA_SF2_C"/>
</dbReference>
<dbReference type="InterPro" id="IPR011116">
    <property type="entry name" value="SecA_Wing/Scaffold"/>
</dbReference>
<dbReference type="InterPro" id="IPR036266">
    <property type="entry name" value="SecA_Wing/Scaffold_sf"/>
</dbReference>
<dbReference type="InterPro" id="IPR036670">
    <property type="entry name" value="SecA_X-link_sf"/>
</dbReference>
<dbReference type="NCBIfam" id="NF006630">
    <property type="entry name" value="PRK09200.1"/>
    <property type="match status" value="1"/>
</dbReference>
<dbReference type="NCBIfam" id="TIGR00963">
    <property type="entry name" value="secA"/>
    <property type="match status" value="1"/>
</dbReference>
<dbReference type="PANTHER" id="PTHR30612:SF0">
    <property type="entry name" value="CHLOROPLAST PROTEIN-TRANSPORTING ATPASE"/>
    <property type="match status" value="1"/>
</dbReference>
<dbReference type="PANTHER" id="PTHR30612">
    <property type="entry name" value="SECA INNER MEMBRANE COMPONENT OF SEC PROTEIN SECRETION SYSTEM"/>
    <property type="match status" value="1"/>
</dbReference>
<dbReference type="Pfam" id="PF21090">
    <property type="entry name" value="P-loop_SecA"/>
    <property type="match status" value="1"/>
</dbReference>
<dbReference type="Pfam" id="PF02810">
    <property type="entry name" value="SEC-C"/>
    <property type="match status" value="1"/>
</dbReference>
<dbReference type="Pfam" id="PF07517">
    <property type="entry name" value="SecA_DEAD"/>
    <property type="match status" value="1"/>
</dbReference>
<dbReference type="Pfam" id="PF01043">
    <property type="entry name" value="SecA_PP_bind"/>
    <property type="match status" value="1"/>
</dbReference>
<dbReference type="Pfam" id="PF07516">
    <property type="entry name" value="SecA_SW"/>
    <property type="match status" value="1"/>
</dbReference>
<dbReference type="PRINTS" id="PR00906">
    <property type="entry name" value="SECA"/>
</dbReference>
<dbReference type="SMART" id="SM00957">
    <property type="entry name" value="SecA_DEAD"/>
    <property type="match status" value="1"/>
</dbReference>
<dbReference type="SMART" id="SM00958">
    <property type="entry name" value="SecA_PP_bind"/>
    <property type="match status" value="1"/>
</dbReference>
<dbReference type="SUPFAM" id="SSF81886">
    <property type="entry name" value="Helical scaffold and wing domains of SecA"/>
    <property type="match status" value="1"/>
</dbReference>
<dbReference type="SUPFAM" id="SSF52540">
    <property type="entry name" value="P-loop containing nucleoside triphosphate hydrolases"/>
    <property type="match status" value="2"/>
</dbReference>
<dbReference type="SUPFAM" id="SSF81767">
    <property type="entry name" value="Pre-protein crosslinking domain of SecA"/>
    <property type="match status" value="1"/>
</dbReference>
<dbReference type="PROSITE" id="PS01312">
    <property type="entry name" value="SECA"/>
    <property type="match status" value="1"/>
</dbReference>
<dbReference type="PROSITE" id="PS51196">
    <property type="entry name" value="SECA_MOTOR_DEAD"/>
    <property type="match status" value="1"/>
</dbReference>
<sequence>MGFLSKIADGNKKEIKRLGKLADKVLALEEDMSILTDEEIKAKTSAFQEKLQSEEDIKKQNKILDDILPEAFALVREGSKRVFNMIPYKVQVMGGIAIHGGDISEMRTGEGKTLTATMPVYLNALTGRGVHVITVNEYLSSVQSQEMAELYEFLGLSVGLNLNSKTTTEKREAYACDITYCTNNELGFDYLRDNMVNYAEERVMRPLNFAIIDEVDSILIDEARTPLIISGEAEKSTSLYTQANVFAKMLKSEDDYNYDEKTKAVQLTEQGIDKAERMFKIDNLYDVNNVDVISHINTALRAHVTLQRDVDYMVNKGEVLIVDQFTGRTMPGRRFSEGLHQAIEAKEGVKIQNESKTMASITFQNYFRMYNKLSGMTGTAKTEEEEFRNIYNMTVTQIPTNKPVQRVDKPDLIYISQKGKFDAVVQDVIEKHKAGQPVLLGTVAVETSEYISNLLKKNGVRHDVLNAKNHEREADIVAGAGQRGAVTIATNMAGRGTDIKLGDGVQELGGLAVIGTERHESRRIDDQLRGRSGRQGDKGDSRFYLSLQDELMVRFGSERLQNMMNRLGMDDSTPIESKMVSRAVESAQKRVEGNNFDARKRVLEYDDVLRKQREIIYGERNSIIDSDESGGLVNDMLRSTLERSVNYYVNEEADDPDYEPFINYVDDVFLNEGDIKVEDIKGKDNEDIFEFVWNKVEIALKDQKEKIGTQFDEFERMILLRSIDTHWTDHIDTMDQLRQGIHLRSYGQQNPLRDYQNEGHQLFDTMMQNIEEDVSKYILKSVVSVEDDLERDKTTDFGKAEHVSAEDGKEKAKAEPYVKDEHIGRNDPCPCGSGKKYKNCHGA</sequence>
<evidence type="ECO:0000255" key="1">
    <source>
        <dbReference type="HAMAP-Rule" id="MF_01382"/>
    </source>
</evidence>
<evidence type="ECO:0000256" key="2">
    <source>
        <dbReference type="SAM" id="MobiDB-lite"/>
    </source>
</evidence>
<comment type="function">
    <text evidence="1">Part of the Sec protein translocase complex. Interacts with the SecYEG preprotein conducting channel. Has a central role in coupling the hydrolysis of ATP to the transfer of proteins into and across the cell membrane, serving as an ATP-driven molecular motor driving the stepwise translocation of polypeptide chains across the membrane.</text>
</comment>
<comment type="catalytic activity">
    <reaction evidence="1">
        <text>ATP + H2O + cellular proteinSide 1 = ADP + phosphate + cellular proteinSide 2.</text>
        <dbReference type="EC" id="7.4.2.8"/>
    </reaction>
</comment>
<comment type="cofactor">
    <cofactor evidence="1">
        <name>Zn(2+)</name>
        <dbReference type="ChEBI" id="CHEBI:29105"/>
    </cofactor>
    <text evidence="1">May bind 1 zinc ion per subunit.</text>
</comment>
<comment type="subunit">
    <text evidence="1">Monomer and homodimer. Part of the essential Sec protein translocation apparatus which comprises SecA, SecYEG and auxiliary proteins SecDF. Other proteins may also be involved.</text>
</comment>
<comment type="subcellular location">
    <subcellularLocation>
        <location evidence="1">Cell membrane</location>
        <topology evidence="1">Peripheral membrane protein</topology>
        <orientation evidence="1">Cytoplasmic side</orientation>
    </subcellularLocation>
    <subcellularLocation>
        <location evidence="1">Cytoplasm</location>
    </subcellularLocation>
    <text evidence="1">Distribution is 50-50.</text>
</comment>
<comment type="similarity">
    <text evidence="1">Belongs to the SecA family.</text>
</comment>
<gene>
    <name evidence="1" type="primary">secA</name>
    <name type="ordered locus">SSP1963</name>
</gene>
<protein>
    <recommendedName>
        <fullName evidence="1">Protein translocase subunit SecA</fullName>
        <ecNumber evidence="1">7.4.2.8</ecNumber>
    </recommendedName>
</protein>
<organism>
    <name type="scientific">Staphylococcus saprophyticus subsp. saprophyticus (strain ATCC 15305 / DSM 20229 / NCIMB 8711 / NCTC 7292 / S-41)</name>
    <dbReference type="NCBI Taxonomy" id="342451"/>
    <lineage>
        <taxon>Bacteria</taxon>
        <taxon>Bacillati</taxon>
        <taxon>Bacillota</taxon>
        <taxon>Bacilli</taxon>
        <taxon>Bacillales</taxon>
        <taxon>Staphylococcaceae</taxon>
        <taxon>Staphylococcus</taxon>
    </lineage>
</organism>
<reference key="1">
    <citation type="journal article" date="2005" name="Proc. Natl. Acad. Sci. U.S.A.">
        <title>Whole genome sequence of Staphylococcus saprophyticus reveals the pathogenesis of uncomplicated urinary tract infection.</title>
        <authorList>
            <person name="Kuroda M."/>
            <person name="Yamashita A."/>
            <person name="Hirakawa H."/>
            <person name="Kumano M."/>
            <person name="Morikawa K."/>
            <person name="Higashide M."/>
            <person name="Maruyama A."/>
            <person name="Inose Y."/>
            <person name="Matoba K."/>
            <person name="Toh H."/>
            <person name="Kuhara S."/>
            <person name="Hattori M."/>
            <person name="Ohta T."/>
        </authorList>
    </citation>
    <scope>NUCLEOTIDE SEQUENCE [LARGE SCALE GENOMIC DNA]</scope>
    <source>
        <strain>ATCC 15305 / DSM 20229 / NCIMB 8711 / NCTC 7292 / S-41</strain>
    </source>
</reference>
<proteinExistence type="inferred from homology"/>
<name>SECA_STAS1</name>
<feature type="chain" id="PRO_0000109613" description="Protein translocase subunit SecA">
    <location>
        <begin position="1"/>
        <end position="843"/>
    </location>
</feature>
<feature type="region of interest" description="Disordered" evidence="2">
    <location>
        <begin position="796"/>
        <end position="833"/>
    </location>
</feature>
<feature type="compositionally biased region" description="Basic and acidic residues" evidence="2">
    <location>
        <begin position="796"/>
        <end position="825"/>
    </location>
</feature>
<feature type="binding site" evidence="1">
    <location>
        <position position="91"/>
    </location>
    <ligand>
        <name>ATP</name>
        <dbReference type="ChEBI" id="CHEBI:30616"/>
    </ligand>
</feature>
<feature type="binding site" evidence="1">
    <location>
        <begin position="109"/>
        <end position="113"/>
    </location>
    <ligand>
        <name>ATP</name>
        <dbReference type="ChEBI" id="CHEBI:30616"/>
    </ligand>
</feature>
<feature type="binding site" evidence="1">
    <location>
        <position position="498"/>
    </location>
    <ligand>
        <name>ATP</name>
        <dbReference type="ChEBI" id="CHEBI:30616"/>
    </ligand>
</feature>
<feature type="binding site" evidence="1">
    <location>
        <position position="829"/>
    </location>
    <ligand>
        <name>Zn(2+)</name>
        <dbReference type="ChEBI" id="CHEBI:29105"/>
    </ligand>
</feature>
<feature type="binding site" evidence="1">
    <location>
        <position position="831"/>
    </location>
    <ligand>
        <name>Zn(2+)</name>
        <dbReference type="ChEBI" id="CHEBI:29105"/>
    </ligand>
</feature>
<feature type="binding site" evidence="1">
    <location>
        <position position="840"/>
    </location>
    <ligand>
        <name>Zn(2+)</name>
        <dbReference type="ChEBI" id="CHEBI:29105"/>
    </ligand>
</feature>
<feature type="binding site" evidence="1">
    <location>
        <position position="841"/>
    </location>
    <ligand>
        <name>Zn(2+)</name>
        <dbReference type="ChEBI" id="CHEBI:29105"/>
    </ligand>
</feature>
<accession>Q49VV2</accession>
<keyword id="KW-0067">ATP-binding</keyword>
<keyword id="KW-1003">Cell membrane</keyword>
<keyword id="KW-0963">Cytoplasm</keyword>
<keyword id="KW-0472">Membrane</keyword>
<keyword id="KW-0479">Metal-binding</keyword>
<keyword id="KW-0547">Nucleotide-binding</keyword>
<keyword id="KW-0653">Protein transport</keyword>
<keyword id="KW-1185">Reference proteome</keyword>
<keyword id="KW-1278">Translocase</keyword>
<keyword id="KW-0811">Translocation</keyword>
<keyword id="KW-0813">Transport</keyword>
<keyword id="KW-0862">Zinc</keyword>